<reference key="1">
    <citation type="journal article" date="2004" name="Proc. Natl. Acad. Sci. U.S.A.">
        <title>The louse-borne human pathogen Bartonella quintana is a genomic derivative of the zoonotic agent Bartonella henselae.</title>
        <authorList>
            <person name="Alsmark U.C.M."/>
            <person name="Frank A.C."/>
            <person name="Karlberg E.O."/>
            <person name="Legault B.-A."/>
            <person name="Ardell D.H."/>
            <person name="Canbaeck B."/>
            <person name="Eriksson A.-S."/>
            <person name="Naeslund A.K."/>
            <person name="Handley S.A."/>
            <person name="Huvet M."/>
            <person name="La Scola B."/>
            <person name="Holmberg M."/>
            <person name="Andersson S.G.E."/>
        </authorList>
    </citation>
    <scope>NUCLEOTIDE SEQUENCE [LARGE SCALE GENOMIC DNA]</scope>
    <source>
        <strain>Toulouse</strain>
    </source>
</reference>
<accession>Q6G194</accession>
<keyword id="KW-0067">ATP-binding</keyword>
<keyword id="KW-0997">Cell inner membrane</keyword>
<keyword id="KW-1003">Cell membrane</keyword>
<keyword id="KW-0472">Membrane</keyword>
<keyword id="KW-0547">Nucleotide-binding</keyword>
<keyword id="KW-0762">Sugar transport</keyword>
<keyword id="KW-1278">Translocase</keyword>
<keyword id="KW-0813">Transport</keyword>
<feature type="chain" id="PRO_0000289728" description="sn-glycerol-3-phosphate import ATP-binding protein UgpC">
    <location>
        <begin position="1"/>
        <end position="348"/>
    </location>
</feature>
<feature type="domain" description="ABC transporter" evidence="1">
    <location>
        <begin position="4"/>
        <end position="235"/>
    </location>
</feature>
<feature type="binding site" evidence="1">
    <location>
        <begin position="37"/>
        <end position="44"/>
    </location>
    <ligand>
        <name>ATP</name>
        <dbReference type="ChEBI" id="CHEBI:30616"/>
    </ligand>
</feature>
<comment type="function">
    <text evidence="1">Part of the ABC transporter complex UgpBAEC involved in sn-glycerol-3-phosphate (G3P) import. Responsible for energy coupling to the transport system.</text>
</comment>
<comment type="catalytic activity">
    <reaction evidence="1">
        <text>sn-glycerol 3-phosphate(out) + ATP + H2O = sn-glycerol 3-phosphate(in) + ADP + phosphate + H(+)</text>
        <dbReference type="Rhea" id="RHEA:21668"/>
        <dbReference type="ChEBI" id="CHEBI:15377"/>
        <dbReference type="ChEBI" id="CHEBI:15378"/>
        <dbReference type="ChEBI" id="CHEBI:30616"/>
        <dbReference type="ChEBI" id="CHEBI:43474"/>
        <dbReference type="ChEBI" id="CHEBI:57597"/>
        <dbReference type="ChEBI" id="CHEBI:456216"/>
        <dbReference type="EC" id="7.6.2.10"/>
    </reaction>
</comment>
<comment type="subunit">
    <text evidence="1">The complex is composed of two ATP-binding proteins (UgpC), two transmembrane proteins (UgpA and UgpE) and a solute-binding protein (UgpB).</text>
</comment>
<comment type="subcellular location">
    <subcellularLocation>
        <location evidence="1">Cell inner membrane</location>
        <topology evidence="1">Peripheral membrane protein</topology>
    </subcellularLocation>
</comment>
<comment type="similarity">
    <text evidence="1">Belongs to the ABC transporter superfamily. sn-glycerol-3-phosphate importer (TC 3.A.1.1.3) family.</text>
</comment>
<proteinExistence type="inferred from homology"/>
<name>UGPC_BARQU</name>
<dbReference type="EC" id="7.6.2.10" evidence="1"/>
<dbReference type="EMBL" id="BX897700">
    <property type="protein sequence ID" value="CAF25676.1"/>
    <property type="molecule type" value="Genomic_DNA"/>
</dbReference>
<dbReference type="RefSeq" id="WP_011178991.1">
    <property type="nucleotide sequence ID" value="NC_005955.1"/>
</dbReference>
<dbReference type="SMR" id="Q6G194"/>
<dbReference type="KEGG" id="bqu:BQ01730"/>
<dbReference type="eggNOG" id="COG3842">
    <property type="taxonomic scope" value="Bacteria"/>
</dbReference>
<dbReference type="HOGENOM" id="CLU_000604_1_1_5"/>
<dbReference type="OrthoDB" id="7817850at2"/>
<dbReference type="Proteomes" id="UP000000597">
    <property type="component" value="Chromosome"/>
</dbReference>
<dbReference type="GO" id="GO:0055052">
    <property type="term" value="C:ATP-binding cassette (ABC) transporter complex, substrate-binding subunit-containing"/>
    <property type="evidence" value="ECO:0007669"/>
    <property type="project" value="TreeGrafter"/>
</dbReference>
<dbReference type="GO" id="GO:0015430">
    <property type="term" value="F:ABC-type glycerol-3-phosphate transporter activity"/>
    <property type="evidence" value="ECO:0007669"/>
    <property type="project" value="UniProtKB-EC"/>
</dbReference>
<dbReference type="GO" id="GO:0005524">
    <property type="term" value="F:ATP binding"/>
    <property type="evidence" value="ECO:0007669"/>
    <property type="project" value="UniProtKB-KW"/>
</dbReference>
<dbReference type="GO" id="GO:0016887">
    <property type="term" value="F:ATP hydrolysis activity"/>
    <property type="evidence" value="ECO:0007669"/>
    <property type="project" value="InterPro"/>
</dbReference>
<dbReference type="GO" id="GO:0008643">
    <property type="term" value="P:carbohydrate transport"/>
    <property type="evidence" value="ECO:0007669"/>
    <property type="project" value="InterPro"/>
</dbReference>
<dbReference type="GO" id="GO:0001407">
    <property type="term" value="P:glycerophosphodiester transmembrane transport"/>
    <property type="evidence" value="ECO:0007669"/>
    <property type="project" value="TreeGrafter"/>
</dbReference>
<dbReference type="CDD" id="cd03301">
    <property type="entry name" value="ABC_MalK_N"/>
    <property type="match status" value="1"/>
</dbReference>
<dbReference type="FunFam" id="3.40.50.300:FF:000042">
    <property type="entry name" value="Maltose/maltodextrin ABC transporter, ATP-binding protein"/>
    <property type="match status" value="1"/>
</dbReference>
<dbReference type="Gene3D" id="2.40.50.100">
    <property type="match status" value="1"/>
</dbReference>
<dbReference type="Gene3D" id="2.40.50.140">
    <property type="entry name" value="Nucleic acid-binding proteins"/>
    <property type="match status" value="1"/>
</dbReference>
<dbReference type="Gene3D" id="3.40.50.300">
    <property type="entry name" value="P-loop containing nucleotide triphosphate hydrolases"/>
    <property type="match status" value="1"/>
</dbReference>
<dbReference type="InterPro" id="IPR003593">
    <property type="entry name" value="AAA+_ATPase"/>
</dbReference>
<dbReference type="InterPro" id="IPR003439">
    <property type="entry name" value="ABC_transporter-like_ATP-bd"/>
</dbReference>
<dbReference type="InterPro" id="IPR017871">
    <property type="entry name" value="ABC_transporter-like_CS"/>
</dbReference>
<dbReference type="InterPro" id="IPR015855">
    <property type="entry name" value="ABC_transpr_MalK-like"/>
</dbReference>
<dbReference type="InterPro" id="IPR047641">
    <property type="entry name" value="ABC_transpr_MalK/UgpC-like"/>
</dbReference>
<dbReference type="InterPro" id="IPR008995">
    <property type="entry name" value="Mo/tungstate-bd_C_term_dom"/>
</dbReference>
<dbReference type="InterPro" id="IPR012340">
    <property type="entry name" value="NA-bd_OB-fold"/>
</dbReference>
<dbReference type="InterPro" id="IPR027417">
    <property type="entry name" value="P-loop_NTPase"/>
</dbReference>
<dbReference type="NCBIfam" id="NF008653">
    <property type="entry name" value="PRK11650.1"/>
    <property type="match status" value="1"/>
</dbReference>
<dbReference type="PANTHER" id="PTHR43875">
    <property type="entry name" value="MALTODEXTRIN IMPORT ATP-BINDING PROTEIN MSMX"/>
    <property type="match status" value="1"/>
</dbReference>
<dbReference type="PANTHER" id="PTHR43875:SF12">
    <property type="entry name" value="SN-GLYCEROL-3-PHOSPHATE IMPORT ATP-BINDING PROTEIN UGPC"/>
    <property type="match status" value="1"/>
</dbReference>
<dbReference type="Pfam" id="PF00005">
    <property type="entry name" value="ABC_tran"/>
    <property type="match status" value="1"/>
</dbReference>
<dbReference type="SMART" id="SM00382">
    <property type="entry name" value="AAA"/>
    <property type="match status" value="1"/>
</dbReference>
<dbReference type="SUPFAM" id="SSF50331">
    <property type="entry name" value="MOP-like"/>
    <property type="match status" value="1"/>
</dbReference>
<dbReference type="SUPFAM" id="SSF52540">
    <property type="entry name" value="P-loop containing nucleoside triphosphate hydrolases"/>
    <property type="match status" value="1"/>
</dbReference>
<dbReference type="PROSITE" id="PS00211">
    <property type="entry name" value="ABC_TRANSPORTER_1"/>
    <property type="match status" value="1"/>
</dbReference>
<dbReference type="PROSITE" id="PS50893">
    <property type="entry name" value="ABC_TRANSPORTER_2"/>
    <property type="match status" value="1"/>
</dbReference>
<dbReference type="PROSITE" id="PS51315">
    <property type="entry name" value="UGPC"/>
    <property type="match status" value="1"/>
</dbReference>
<organism>
    <name type="scientific">Bartonella quintana (strain Toulouse)</name>
    <name type="common">Rochalimaea quintana</name>
    <dbReference type="NCBI Taxonomy" id="283165"/>
    <lineage>
        <taxon>Bacteria</taxon>
        <taxon>Pseudomonadati</taxon>
        <taxon>Pseudomonadota</taxon>
        <taxon>Alphaproteobacteria</taxon>
        <taxon>Hyphomicrobiales</taxon>
        <taxon>Bartonellaceae</taxon>
        <taxon>Bartonella</taxon>
    </lineage>
</organism>
<evidence type="ECO:0000255" key="1">
    <source>
        <dbReference type="HAMAP-Rule" id="MF_01727"/>
    </source>
</evidence>
<protein>
    <recommendedName>
        <fullName evidence="1">sn-glycerol-3-phosphate import ATP-binding protein UgpC</fullName>
        <ecNumber evidence="1">7.6.2.10</ecNumber>
    </recommendedName>
</protein>
<gene>
    <name evidence="1" type="primary">ugpC</name>
    <name type="ordered locus">BQ01730</name>
</gene>
<sequence>MAIIQLSNIKKQYENGILVIDDLNLTVADSELLVLVGPSGCGKSTLLRIIAGLEQVTSGELYIDDERINDREPADRDIAMVFQNYALYPHMTVRGNLEYGLKNRKTPKDEINRRITHAAKLLEIESFLDRKPRQLSGGQRQRVAMGRVIVRQPRVFLFDEPLSNLDAKLRAQMCIEIKTLQRSLGTTSLYVTHDQLEAMTLADRIAVINKGAIEQIGTPIEIYDTPETTFVADFIGSPPMNFLDRKILEQHLGYSFSYNKETDLLAFRPEVILLGEYPDKGPVFHTQIELIKPIGTGCHVLTRWNETIFTIEIKERLTNDYGKKLSFTVPHQNFHTFNKTTGKRKSNK</sequence>